<protein>
    <recommendedName>
        <fullName>Histone-lysine N-methyltransferase SETD7</fullName>
        <ecNumber evidence="3 7">2.1.1.364</ecNumber>
    </recommendedName>
    <alternativeName>
        <fullName>Histone H3-K4 methyltransferase SETD7</fullName>
        <shortName>H3-K4-HMTase SETD7</shortName>
    </alternativeName>
    <alternativeName>
        <fullName evidence="16">Lysine N-methyltransferase 7</fullName>
    </alternativeName>
    <alternativeName>
        <fullName evidence="16">SET domain-containing protein 7</fullName>
    </alternativeName>
    <alternativeName>
        <fullName evidence="18">SET7/9</fullName>
    </alternativeName>
</protein>
<proteinExistence type="evidence at protein level"/>
<comment type="function">
    <text evidence="1 4 5 7 8 9 10 11 12 14 15">Histone methyltransferase that specifically monomethylates 'Lys-4' of histone H3 (PubMed:11779497, PubMed:11850410, PubMed:12540855, PubMed:12588998, PubMed:16141209). H3 'Lys-4' methylation represents a specific tag for epigenetic transcriptional activation (PubMed:12540855, PubMed:12588998, PubMed:16141209). Plays a central role in the transcriptional activation of genes such as collagenase or insulin (PubMed:12588998, PubMed:16141209). Recruited by IPF1/PDX-1 to the insulin promoter, leading to activate transcription (PubMed:16141209). Also has methyltransferase activity toward non-histone proteins such as CGAS, p53/TP53, TAF10, and possibly TAF7 by recognizing and binding the [KR]-[STA]-K in substrate proteins (PubMed:15099517, PubMed:15525938, PubMed:16415881, PubMed:35210392). Monomethylates 'Lys-189' of TAF10, leading to increase the affinity of TAF10 for RNA polymerase II (PubMed:15099517, PubMed:16415881). Monomethylates 'Lys-372' of p53/TP53, stabilizing p53/TP53 and increasing p53/TP53-mediated transcriptional activation (PubMed:15525938, PubMed:16415881, PubMed:17108971). Monomethylates 'Lys-491' of CGAS, promoting interaction between SGF29 and CGAS (By similarity).</text>
</comment>
<comment type="catalytic activity">
    <reaction evidence="3 7">
        <text>L-lysyl(4)-[histone H3] + S-adenosyl-L-methionine = N(6)-methyl-L-lysyl(4)-[histone H3] + S-adenosyl-L-homocysteine + H(+)</text>
        <dbReference type="Rhea" id="RHEA:60264"/>
        <dbReference type="Rhea" id="RHEA-COMP:15543"/>
        <dbReference type="Rhea" id="RHEA-COMP:15547"/>
        <dbReference type="ChEBI" id="CHEBI:15378"/>
        <dbReference type="ChEBI" id="CHEBI:29969"/>
        <dbReference type="ChEBI" id="CHEBI:57856"/>
        <dbReference type="ChEBI" id="CHEBI:59789"/>
        <dbReference type="ChEBI" id="CHEBI:61929"/>
        <dbReference type="EC" id="2.1.1.364"/>
    </reaction>
</comment>
<comment type="catalytic activity">
    <reaction evidence="9 10 12">
        <text>L-lysyl-[protein] + S-adenosyl-L-methionine = N(6)-methyl-L-lysyl-[protein] + S-adenosyl-L-homocysteine + H(+)</text>
        <dbReference type="Rhea" id="RHEA:51736"/>
        <dbReference type="Rhea" id="RHEA-COMP:9752"/>
        <dbReference type="Rhea" id="RHEA-COMP:13053"/>
        <dbReference type="ChEBI" id="CHEBI:15378"/>
        <dbReference type="ChEBI" id="CHEBI:29969"/>
        <dbReference type="ChEBI" id="CHEBI:57856"/>
        <dbReference type="ChEBI" id="CHEBI:59789"/>
        <dbReference type="ChEBI" id="CHEBI:61929"/>
    </reaction>
    <physiologicalReaction direction="left-to-right" evidence="9 10 12">
        <dbReference type="Rhea" id="RHEA:51737"/>
    </physiologicalReaction>
</comment>
<comment type="biophysicochemical properties">
    <kinetics>
        <KM evidence="12">29 uM for histone H3</KM>
        <KM evidence="12">12 uM for TAF10</KM>
        <KM evidence="12">69 uM for p53/TP53</KM>
    </kinetics>
</comment>
<comment type="subunit">
    <text evidence="6 7 11">Interacts with IPF1/PDX-1.</text>
</comment>
<comment type="interaction">
    <interactant intactId="EBI-1268586">
        <id>Q8WTS6</id>
    </interactant>
    <interactant intactId="EBI-719459">
        <id>P26358</id>
        <label>DNMT1</label>
    </interactant>
    <organismsDiffer>false</organismsDiffer>
    <experiments>9</experiments>
</comment>
<comment type="interaction">
    <interactant intactId="EBI-1268586">
        <id>Q8WTS6</id>
    </interactant>
    <interactant intactId="EBI-79722">
        <id>P68431</id>
        <label>H3C12</label>
    </interactant>
    <organismsDiffer>false</organismsDiffer>
    <experiments>3</experiments>
</comment>
<comment type="interaction">
    <interactant intactId="EBI-1268586">
        <id>Q8WTS6</id>
    </interactant>
    <interactant intactId="EBI-1250177">
        <id>Q96RI1</id>
        <label>NR1H4</label>
    </interactant>
    <organismsDiffer>false</organismsDiffer>
    <experiments>5</experiments>
</comment>
<comment type="interaction">
    <interactant intactId="EBI-1268586">
        <id>Q8WTS6</id>
    </interactant>
    <interactant intactId="EBI-491274">
        <id>P06400</id>
        <label>RB1</label>
    </interactant>
    <organismsDiffer>false</organismsDiffer>
    <experiments>4</experiments>
</comment>
<comment type="interaction">
    <interactant intactId="EBI-1268586">
        <id>Q8WTS6</id>
    </interactant>
    <interactant intactId="EBI-73886">
        <id>Q04206</id>
        <label>RELA</label>
    </interactant>
    <organismsDiffer>false</organismsDiffer>
    <experiments>12</experiments>
</comment>
<comment type="interaction">
    <interactant intactId="EBI-1268586">
        <id>Q8WTS6</id>
    </interactant>
    <interactant intactId="EBI-748601">
        <id>Q9UHV2</id>
        <label>SERTAD1</label>
    </interactant>
    <organismsDiffer>false</organismsDiffer>
    <experiments>2</experiments>
</comment>
<comment type="interaction">
    <interactant intactId="EBI-1268586">
        <id>Q8WTS6</id>
    </interactant>
    <interactant intactId="EBI-1802965">
        <id>Q96EB6</id>
        <label>SIRT1</label>
    </interactant>
    <organismsDiffer>false</organismsDiffer>
    <experiments>11</experiments>
</comment>
<comment type="interaction">
    <interactant intactId="EBI-1268586">
        <id>Q8WTS6</id>
    </interactant>
    <interactant intactId="EBI-708376">
        <id>Q12962</id>
        <label>TAF10</label>
    </interactant>
    <organismsDiffer>false</organismsDiffer>
    <experiments>4</experiments>
</comment>
<comment type="interaction">
    <interactant intactId="EBI-1268586">
        <id>Q8WTS6</id>
    </interactant>
    <interactant intactId="EBI-366083">
        <id>P04637</id>
        <label>TP53</label>
    </interactant>
    <organismsDiffer>false</organismsDiffer>
    <experiments>11</experiments>
</comment>
<comment type="interaction">
    <interactant intactId="EBI-1268586">
        <id>Q8WTS6</id>
    </interactant>
    <interactant intactId="EBI-6127038">
        <id>Q9WVH4</id>
        <label>Foxo3</label>
    </interactant>
    <organismsDiffer>true</organismsDiffer>
    <experiments>5</experiments>
</comment>
<comment type="interaction">
    <interactant intactId="EBI-1268586">
        <id>Q8WTS6</id>
    </interactant>
    <interactant intactId="EBI-79743">
        <id>P68433</id>
        <label>H3c8</label>
    </interactant>
    <organismsDiffer>true</organismsDiffer>
    <experiments>2</experiments>
</comment>
<comment type="interaction">
    <interactant intactId="EBI-1268586">
        <id>Q8WTS6</id>
    </interactant>
    <interactant intactId="EBI-644400">
        <id>Q04207</id>
        <label>Rela</label>
    </interactant>
    <organismsDiffer>true</organismsDiffer>
    <experiments>2</experiments>
</comment>
<comment type="subcellular location">
    <subcellularLocation>
        <location evidence="20">Nucleus</location>
    </subcellularLocation>
    <subcellularLocation>
        <location evidence="21">Chromosome</location>
    </subcellularLocation>
</comment>
<comment type="tissue specificity">
    <text evidence="11">Widely expressed. Expressed in pancreatic islets.</text>
</comment>
<comment type="domain">
    <text evidence="4">The SET domain is necessary but not sufficient for histone methyltransferase activity.</text>
</comment>
<comment type="similarity">
    <text evidence="3">Belongs to the class V-like SAM-binding methyltransferase superfamily. Histone-lysine methyltransferase family. SET7 subfamily.</text>
</comment>
<comment type="sequence caution" evidence="19">
    <conflict type="erroneous initiation">
        <sequence resource="EMBL-CDS" id="BAB21808"/>
    </conflict>
</comment>
<feature type="chain" id="PRO_0000186054" description="Histone-lysine N-methyltransferase SETD7">
    <location>
        <begin position="1"/>
        <end position="366"/>
    </location>
</feature>
<feature type="repeat" description="MORN 1">
    <location>
        <begin position="36"/>
        <end position="58"/>
    </location>
</feature>
<feature type="repeat" description="MORN 2">
    <location>
        <begin position="59"/>
        <end position="81"/>
    </location>
</feature>
<feature type="repeat" description="MORN 3">
    <location>
        <begin position="106"/>
        <end position="128"/>
    </location>
</feature>
<feature type="domain" description="SET" evidence="2">
    <location>
        <begin position="214"/>
        <end position="336"/>
    </location>
</feature>
<feature type="binding site" evidence="6 7">
    <location>
        <begin position="226"/>
        <end position="228"/>
    </location>
    <ligand>
        <name>S-adenosyl-L-methionine</name>
        <dbReference type="ChEBI" id="CHEBI:59789"/>
    </ligand>
</feature>
<feature type="binding site" evidence="6 7">
    <location>
        <position position="296"/>
    </location>
    <ligand>
        <name>S-adenosyl-L-methionine</name>
        <dbReference type="ChEBI" id="CHEBI:59789"/>
    </ligand>
</feature>
<feature type="binding site" evidence="6 7">
    <location>
        <position position="297"/>
    </location>
    <ligand>
        <name>S-adenosyl-L-methionine</name>
        <dbReference type="ChEBI" id="CHEBI:59789"/>
    </ligand>
</feature>
<feature type="binding site" evidence="2 6 7">
    <location>
        <position position="356"/>
    </location>
    <ligand>
        <name>S-adenosyl-L-methionine</name>
        <dbReference type="ChEBI" id="CHEBI:59789"/>
    </ligand>
</feature>
<feature type="site" description="Histone H3K4 binding" evidence="7">
    <location>
        <position position="245"/>
    </location>
</feature>
<feature type="site" description="Histone H3K4 binding" evidence="7">
    <location>
        <position position="256"/>
    </location>
</feature>
<feature type="site" description="Histone H3K4 binding" evidence="7">
    <location>
        <position position="266"/>
    </location>
</feature>
<feature type="site" description="Histone H3K4 binding" evidence="7">
    <location>
        <position position="317"/>
    </location>
</feature>
<feature type="site" description="Histone H3K4 binding" evidence="7">
    <location>
        <position position="335"/>
    </location>
</feature>
<feature type="mutagenesis site" description="Increases near-attack conformations." evidence="13">
    <original>E</original>
    <variation>A</variation>
    <location>
        <position position="220"/>
    </location>
</feature>
<feature type="mutagenesis site" description="Increases near-attack conformations." evidence="13">
    <original>E</original>
    <variation>A</variation>
    <location>
        <position position="228"/>
    </location>
</feature>
<feature type="mutagenesis site" description="Significantly reduces the monomethyltransferase activity but increases the dimethyltransferase activity." evidence="7 13">
    <original>Y</original>
    <variation>A</variation>
    <location>
        <position position="245"/>
    </location>
</feature>
<feature type="mutagenesis site" description="Significantly reduces the catalytic activity." evidence="13">
    <original>K</original>
    <variation>A</variation>
    <location>
        <position position="294"/>
    </location>
</feature>
<feature type="mutagenesis site" description="Abolishes methyltransferase activity." evidence="4 5 9 10 11">
    <original>H</original>
    <variation>A</variation>
    <variation>G</variation>
    <location>
        <position position="297"/>
    </location>
</feature>
<feature type="mutagenesis site" description="Induces a reduction in methyltransferase activity toward TAF10 but an increased methyltransferase activity for H3 and p53/TP53." evidence="12">
    <original>K</original>
    <variation>A</variation>
    <location>
        <position position="317"/>
    </location>
</feature>
<feature type="strand" evidence="22">
    <location>
        <begin position="54"/>
        <end position="56"/>
    </location>
</feature>
<feature type="strand" evidence="22">
    <location>
        <begin position="61"/>
        <end position="64"/>
    </location>
</feature>
<feature type="strand" evidence="22">
    <location>
        <begin position="67"/>
        <end position="75"/>
    </location>
</feature>
<feature type="strand" evidence="22">
    <location>
        <begin position="81"/>
        <end position="87"/>
    </location>
</feature>
<feature type="strand" evidence="22">
    <location>
        <begin position="90"/>
        <end position="98"/>
    </location>
</feature>
<feature type="strand" evidence="22">
    <location>
        <begin position="100"/>
        <end position="102"/>
    </location>
</feature>
<feature type="strand" evidence="22">
    <location>
        <begin position="104"/>
        <end position="111"/>
    </location>
</feature>
<feature type="helix" evidence="27">
    <location>
        <begin position="114"/>
        <end position="116"/>
    </location>
</feature>
<feature type="strand" evidence="25">
    <location>
        <begin position="119"/>
        <end position="122"/>
    </location>
</feature>
<feature type="strand" evidence="25">
    <location>
        <begin position="128"/>
        <end position="131"/>
    </location>
</feature>
<feature type="strand" evidence="29">
    <location>
        <begin position="135"/>
        <end position="137"/>
    </location>
</feature>
<feature type="strand" evidence="25">
    <location>
        <begin position="141"/>
        <end position="147"/>
    </location>
</feature>
<feature type="strand" evidence="25">
    <location>
        <begin position="151"/>
        <end position="160"/>
    </location>
</feature>
<feature type="strand" evidence="25">
    <location>
        <begin position="163"/>
        <end position="176"/>
    </location>
</feature>
<feature type="strand" evidence="25">
    <location>
        <begin position="179"/>
        <end position="184"/>
    </location>
</feature>
<feature type="strand" evidence="23">
    <location>
        <begin position="186"/>
        <end position="188"/>
    </location>
</feature>
<feature type="turn" evidence="26">
    <location>
        <begin position="203"/>
        <end position="206"/>
    </location>
</feature>
<feature type="helix" evidence="25">
    <location>
        <begin position="210"/>
        <end position="213"/>
    </location>
</feature>
<feature type="strand" evidence="25">
    <location>
        <begin position="216"/>
        <end position="220"/>
    </location>
</feature>
<feature type="turn" evidence="24">
    <location>
        <begin position="224"/>
        <end position="226"/>
    </location>
</feature>
<feature type="strand" evidence="25">
    <location>
        <begin position="228"/>
        <end position="234"/>
    </location>
</feature>
<feature type="strand" evidence="25">
    <location>
        <begin position="241"/>
        <end position="245"/>
    </location>
</feature>
<feature type="strand" evidence="25">
    <location>
        <begin position="248"/>
        <end position="250"/>
    </location>
</feature>
<feature type="helix" evidence="25">
    <location>
        <begin position="252"/>
        <end position="256"/>
    </location>
</feature>
<feature type="helix" evidence="25">
    <location>
        <begin position="260"/>
        <end position="262"/>
    </location>
</feature>
<feature type="strand" evidence="22">
    <location>
        <begin position="266"/>
        <end position="268"/>
    </location>
</feature>
<feature type="strand" evidence="25">
    <location>
        <begin position="270"/>
        <end position="272"/>
    </location>
</feature>
<feature type="strand" evidence="25">
    <location>
        <begin position="274"/>
        <end position="276"/>
    </location>
</feature>
<feature type="turn" evidence="25">
    <location>
        <begin position="279"/>
        <end position="282"/>
    </location>
</feature>
<feature type="turn" evidence="25">
    <location>
        <begin position="284"/>
        <end position="286"/>
    </location>
</feature>
<feature type="helix" evidence="25">
    <location>
        <begin position="292"/>
        <end position="294"/>
    </location>
</feature>
<feature type="strand" evidence="22">
    <location>
        <begin position="295"/>
        <end position="300"/>
    </location>
</feature>
<feature type="strand" evidence="25">
    <location>
        <begin position="302"/>
        <end position="310"/>
    </location>
</feature>
<feature type="turn" evidence="25">
    <location>
        <begin position="311"/>
        <end position="313"/>
    </location>
</feature>
<feature type="strand" evidence="25">
    <location>
        <begin position="314"/>
        <end position="323"/>
    </location>
</feature>
<feature type="strand" evidence="25">
    <location>
        <begin position="330"/>
        <end position="333"/>
    </location>
</feature>
<feature type="strand" evidence="30">
    <location>
        <begin position="338"/>
        <end position="340"/>
    </location>
</feature>
<feature type="strand" evidence="28">
    <location>
        <begin position="344"/>
        <end position="346"/>
    </location>
</feature>
<feature type="helix" evidence="25">
    <location>
        <begin position="351"/>
        <end position="363"/>
    </location>
</feature>
<dbReference type="EC" id="2.1.1.364" evidence="3 7"/>
<dbReference type="EMBL" id="AF448510">
    <property type="protein sequence ID" value="AAL56579.1"/>
    <property type="molecule type" value="mRNA"/>
</dbReference>
<dbReference type="EMBL" id="AF462150">
    <property type="protein sequence ID" value="AAL69901.1"/>
    <property type="molecule type" value="mRNA"/>
</dbReference>
<dbReference type="EMBL" id="AB051504">
    <property type="protein sequence ID" value="BAB21808.1"/>
    <property type="status" value="ALT_INIT"/>
    <property type="molecule type" value="mRNA"/>
</dbReference>
<dbReference type="EMBL" id="AC112236">
    <property type="status" value="NOT_ANNOTATED_CDS"/>
    <property type="molecule type" value="Genomic_DNA"/>
</dbReference>
<dbReference type="EMBL" id="AC114743">
    <property type="protein sequence ID" value="AAY40937.1"/>
    <property type="molecule type" value="Genomic_DNA"/>
</dbReference>
<dbReference type="EMBL" id="BC121055">
    <property type="protein sequence ID" value="AAI21056.1"/>
    <property type="molecule type" value="mRNA"/>
</dbReference>
<dbReference type="EMBL" id="BC121056">
    <property type="protein sequence ID" value="AAI21057.1"/>
    <property type="molecule type" value="mRNA"/>
</dbReference>
<dbReference type="CCDS" id="CCDS3748.1"/>
<dbReference type="RefSeq" id="NP_001293128.1">
    <property type="nucleotide sequence ID" value="NM_001306199.1"/>
</dbReference>
<dbReference type="RefSeq" id="NP_085151.1">
    <property type="nucleotide sequence ID" value="NM_030648.4"/>
</dbReference>
<dbReference type="PDB" id="1H3I">
    <property type="method" value="X-ray"/>
    <property type="resolution" value="2.10 A"/>
    <property type="chains" value="A/B=52-344"/>
</dbReference>
<dbReference type="PDB" id="1MT6">
    <property type="method" value="X-ray"/>
    <property type="resolution" value="2.20 A"/>
    <property type="chains" value="A=58-337"/>
</dbReference>
<dbReference type="PDB" id="1MUF">
    <property type="method" value="X-ray"/>
    <property type="resolution" value="2.26 A"/>
    <property type="chains" value="A=81-337"/>
</dbReference>
<dbReference type="PDB" id="1N6A">
    <property type="method" value="X-ray"/>
    <property type="resolution" value="1.70 A"/>
    <property type="chains" value="A=108-366"/>
</dbReference>
<dbReference type="PDB" id="1N6C">
    <property type="method" value="X-ray"/>
    <property type="resolution" value="2.30 A"/>
    <property type="chains" value="A=70-366"/>
</dbReference>
<dbReference type="PDB" id="1O9S">
    <property type="method" value="X-ray"/>
    <property type="resolution" value="1.75 A"/>
    <property type="chains" value="A/B=108-366"/>
</dbReference>
<dbReference type="PDB" id="1XQH">
    <property type="method" value="X-ray"/>
    <property type="resolution" value="1.75 A"/>
    <property type="chains" value="A/E=108-366"/>
</dbReference>
<dbReference type="PDB" id="2F69">
    <property type="method" value="X-ray"/>
    <property type="resolution" value="1.30 A"/>
    <property type="chains" value="A=110-366"/>
</dbReference>
<dbReference type="PDB" id="3CBM">
    <property type="method" value="X-ray"/>
    <property type="resolution" value="1.69 A"/>
    <property type="chains" value="A=111-366"/>
</dbReference>
<dbReference type="PDB" id="3CBO">
    <property type="method" value="X-ray"/>
    <property type="resolution" value="1.65 A"/>
    <property type="chains" value="A=111-366"/>
</dbReference>
<dbReference type="PDB" id="3CBP">
    <property type="method" value="X-ray"/>
    <property type="resolution" value="1.42 A"/>
    <property type="chains" value="A=111-366"/>
</dbReference>
<dbReference type="PDB" id="3M53">
    <property type="method" value="X-ray"/>
    <property type="resolution" value="1.85 A"/>
    <property type="chains" value="A=110-366"/>
</dbReference>
<dbReference type="PDB" id="3M54">
    <property type="method" value="X-ray"/>
    <property type="resolution" value="1.60 A"/>
    <property type="chains" value="A=110-366"/>
</dbReference>
<dbReference type="PDB" id="3M55">
    <property type="method" value="X-ray"/>
    <property type="resolution" value="1.55 A"/>
    <property type="chains" value="A=110-366"/>
</dbReference>
<dbReference type="PDB" id="3M56">
    <property type="method" value="X-ray"/>
    <property type="resolution" value="1.65 A"/>
    <property type="chains" value="A=110-366"/>
</dbReference>
<dbReference type="PDB" id="3M57">
    <property type="method" value="X-ray"/>
    <property type="resolution" value="1.70 A"/>
    <property type="chains" value="A=110-366"/>
</dbReference>
<dbReference type="PDB" id="3M58">
    <property type="method" value="X-ray"/>
    <property type="resolution" value="1.40 A"/>
    <property type="chains" value="A=110-366"/>
</dbReference>
<dbReference type="PDB" id="3M59">
    <property type="method" value="X-ray"/>
    <property type="resolution" value="1.70 A"/>
    <property type="chains" value="A=110-366"/>
</dbReference>
<dbReference type="PDB" id="3M5A">
    <property type="method" value="X-ray"/>
    <property type="resolution" value="1.75 A"/>
    <property type="chains" value="A=110-366"/>
</dbReference>
<dbReference type="PDB" id="3OS5">
    <property type="method" value="X-ray"/>
    <property type="resolution" value="1.69 A"/>
    <property type="chains" value="A=111-366"/>
</dbReference>
<dbReference type="PDB" id="3VUZ">
    <property type="method" value="X-ray"/>
    <property type="resolution" value="2.50 A"/>
    <property type="chains" value="A=111-366"/>
</dbReference>
<dbReference type="PDB" id="3VV0">
    <property type="method" value="X-ray"/>
    <property type="resolution" value="2.00 A"/>
    <property type="chains" value="A=111-366"/>
</dbReference>
<dbReference type="PDB" id="4E47">
    <property type="method" value="X-ray"/>
    <property type="resolution" value="2.00 A"/>
    <property type="chains" value="A/B/C/D=109-366"/>
</dbReference>
<dbReference type="PDB" id="4J7F">
    <property type="method" value="X-ray"/>
    <property type="resolution" value="1.59 A"/>
    <property type="chains" value="A=110-366"/>
</dbReference>
<dbReference type="PDB" id="4J7I">
    <property type="method" value="X-ray"/>
    <property type="resolution" value="2.56 A"/>
    <property type="chains" value="A=110-366"/>
</dbReference>
<dbReference type="PDB" id="4J83">
    <property type="method" value="X-ray"/>
    <property type="resolution" value="1.70 A"/>
    <property type="chains" value="A=110-366"/>
</dbReference>
<dbReference type="PDB" id="4J8O">
    <property type="method" value="X-ray"/>
    <property type="resolution" value="1.63 A"/>
    <property type="chains" value="A=110-366"/>
</dbReference>
<dbReference type="PDB" id="4JDS">
    <property type="method" value="X-ray"/>
    <property type="resolution" value="1.70 A"/>
    <property type="chains" value="A/B/C/D=109-366"/>
</dbReference>
<dbReference type="PDB" id="4JLG">
    <property type="method" value="X-ray"/>
    <property type="resolution" value="1.90 A"/>
    <property type="chains" value="A/B=109-366"/>
</dbReference>
<dbReference type="PDB" id="5AYF">
    <property type="method" value="X-ray"/>
    <property type="resolution" value="2.00 A"/>
    <property type="chains" value="A=111-366"/>
</dbReference>
<dbReference type="PDB" id="5EG2">
    <property type="method" value="X-ray"/>
    <property type="resolution" value="1.55 A"/>
    <property type="chains" value="A=110-366"/>
</dbReference>
<dbReference type="PDB" id="5YLT">
    <property type="method" value="X-ray"/>
    <property type="resolution" value="1.69 A"/>
    <property type="chains" value="A=111-366"/>
</dbReference>
<dbReference type="PDBsum" id="1H3I"/>
<dbReference type="PDBsum" id="1MT6"/>
<dbReference type="PDBsum" id="1MUF"/>
<dbReference type="PDBsum" id="1N6A"/>
<dbReference type="PDBsum" id="1N6C"/>
<dbReference type="PDBsum" id="1O9S"/>
<dbReference type="PDBsum" id="1XQH"/>
<dbReference type="PDBsum" id="2F69"/>
<dbReference type="PDBsum" id="3CBM"/>
<dbReference type="PDBsum" id="3CBO"/>
<dbReference type="PDBsum" id="3CBP"/>
<dbReference type="PDBsum" id="3M53"/>
<dbReference type="PDBsum" id="3M54"/>
<dbReference type="PDBsum" id="3M55"/>
<dbReference type="PDBsum" id="3M56"/>
<dbReference type="PDBsum" id="3M57"/>
<dbReference type="PDBsum" id="3M58"/>
<dbReference type="PDBsum" id="3M59"/>
<dbReference type="PDBsum" id="3M5A"/>
<dbReference type="PDBsum" id="3OS5"/>
<dbReference type="PDBsum" id="3VUZ"/>
<dbReference type="PDBsum" id="3VV0"/>
<dbReference type="PDBsum" id="4E47"/>
<dbReference type="PDBsum" id="4J7F"/>
<dbReference type="PDBsum" id="4J7I"/>
<dbReference type="PDBsum" id="4J83"/>
<dbReference type="PDBsum" id="4J8O"/>
<dbReference type="PDBsum" id="4JDS"/>
<dbReference type="PDBsum" id="4JLG"/>
<dbReference type="PDBsum" id="5AYF"/>
<dbReference type="PDBsum" id="5EG2"/>
<dbReference type="PDBsum" id="5YLT"/>
<dbReference type="BMRB" id="Q8WTS6"/>
<dbReference type="SMR" id="Q8WTS6"/>
<dbReference type="BioGRID" id="123332">
    <property type="interactions" value="80"/>
</dbReference>
<dbReference type="CORUM" id="Q8WTS6"/>
<dbReference type="DIP" id="DIP-29045N"/>
<dbReference type="FunCoup" id="Q8WTS6">
    <property type="interactions" value="2119"/>
</dbReference>
<dbReference type="IntAct" id="Q8WTS6">
    <property type="interactions" value="39"/>
</dbReference>
<dbReference type="MINT" id="Q8WTS6"/>
<dbReference type="STRING" id="9606.ENSP00000274031"/>
<dbReference type="BindingDB" id="Q8WTS6"/>
<dbReference type="ChEMBL" id="CHEMBL5523"/>
<dbReference type="DrugBank" id="DB01752">
    <property type="generic name" value="S-adenosyl-L-homocysteine"/>
</dbReference>
<dbReference type="DrugCentral" id="Q8WTS6"/>
<dbReference type="GuidetoPHARMACOLOGY" id="2703"/>
<dbReference type="GlyGen" id="Q8WTS6">
    <property type="glycosylation" value="1 site, 1 O-linked glycan (1 site)"/>
</dbReference>
<dbReference type="iPTMnet" id="Q8WTS6"/>
<dbReference type="PhosphoSitePlus" id="Q8WTS6"/>
<dbReference type="BioMuta" id="SETD7"/>
<dbReference type="DMDM" id="25091217"/>
<dbReference type="jPOST" id="Q8WTS6"/>
<dbReference type="MassIVE" id="Q8WTS6"/>
<dbReference type="PaxDb" id="9606-ENSP00000274031"/>
<dbReference type="PeptideAtlas" id="Q8WTS6"/>
<dbReference type="ProteomicsDB" id="74595"/>
<dbReference type="Pumba" id="Q8WTS6"/>
<dbReference type="ABCD" id="Q8WTS6">
    <property type="antibodies" value="7 sequenced antibodies"/>
</dbReference>
<dbReference type="Antibodypedia" id="16193">
    <property type="antibodies" value="539 antibodies from 40 providers"/>
</dbReference>
<dbReference type="DNASU" id="80854"/>
<dbReference type="Ensembl" id="ENST00000274031.8">
    <property type="protein sequence ID" value="ENSP00000274031.3"/>
    <property type="gene ID" value="ENSG00000145391.14"/>
</dbReference>
<dbReference type="GeneID" id="80854"/>
<dbReference type="KEGG" id="hsa:80854"/>
<dbReference type="MANE-Select" id="ENST00000274031.8">
    <property type="protein sequence ID" value="ENSP00000274031.3"/>
    <property type="RefSeq nucleotide sequence ID" value="NM_030648.4"/>
    <property type="RefSeq protein sequence ID" value="NP_085151.1"/>
</dbReference>
<dbReference type="UCSC" id="uc003ihw.4">
    <property type="organism name" value="human"/>
</dbReference>
<dbReference type="AGR" id="HGNC:30412"/>
<dbReference type="CTD" id="80854"/>
<dbReference type="DisGeNET" id="80854"/>
<dbReference type="GeneCards" id="SETD7"/>
<dbReference type="HGNC" id="HGNC:30412">
    <property type="gene designation" value="SETD7"/>
</dbReference>
<dbReference type="HPA" id="ENSG00000145391">
    <property type="expression patterns" value="Low tissue specificity"/>
</dbReference>
<dbReference type="MIM" id="606594">
    <property type="type" value="gene"/>
</dbReference>
<dbReference type="neXtProt" id="NX_Q8WTS6"/>
<dbReference type="OpenTargets" id="ENSG00000145391"/>
<dbReference type="PharmGKB" id="PA143485615"/>
<dbReference type="VEuPathDB" id="HostDB:ENSG00000145391"/>
<dbReference type="eggNOG" id="KOG1079">
    <property type="taxonomic scope" value="Eukaryota"/>
</dbReference>
<dbReference type="GeneTree" id="ENSGT00390000004827"/>
<dbReference type="HOGENOM" id="CLU_803117_0_0_1"/>
<dbReference type="InParanoid" id="Q8WTS6"/>
<dbReference type="OMA" id="HSFIPNC"/>
<dbReference type="OrthoDB" id="294378at2759"/>
<dbReference type="PAN-GO" id="Q8WTS6">
    <property type="GO annotations" value="6 GO annotations based on evolutionary models"/>
</dbReference>
<dbReference type="PhylomeDB" id="Q8WTS6"/>
<dbReference type="TreeFam" id="TF106392"/>
<dbReference type="BioCyc" id="MetaCyc:HS07252-MONOMER"/>
<dbReference type="BRENDA" id="2.1.1.364">
    <property type="organism ID" value="2681"/>
</dbReference>
<dbReference type="PathwayCommons" id="Q8WTS6"/>
<dbReference type="Reactome" id="R-HSA-3214841">
    <property type="pathway name" value="PKMTs methylate histone lysines"/>
</dbReference>
<dbReference type="SABIO-RK" id="Q8WTS6"/>
<dbReference type="SignaLink" id="Q8WTS6"/>
<dbReference type="BioGRID-ORCS" id="80854">
    <property type="hits" value="20 hits in 1174 CRISPR screens"/>
</dbReference>
<dbReference type="ChiTaRS" id="SETD7">
    <property type="organism name" value="human"/>
</dbReference>
<dbReference type="EvolutionaryTrace" id="Q8WTS6"/>
<dbReference type="GeneWiki" id="SETD7"/>
<dbReference type="GenomeRNAi" id="80854"/>
<dbReference type="Pharos" id="Q8WTS6">
    <property type="development level" value="Tchem"/>
</dbReference>
<dbReference type="PRO" id="PR:Q8WTS6"/>
<dbReference type="Proteomes" id="UP000005640">
    <property type="component" value="Chromosome 4"/>
</dbReference>
<dbReference type="RNAct" id="Q8WTS6">
    <property type="molecule type" value="protein"/>
</dbReference>
<dbReference type="Bgee" id="ENSG00000145391">
    <property type="expression patterns" value="Expressed in tibialis anterior and 195 other cell types or tissues"/>
</dbReference>
<dbReference type="ExpressionAtlas" id="Q8WTS6">
    <property type="expression patterns" value="baseline and differential"/>
</dbReference>
<dbReference type="GO" id="GO:0005694">
    <property type="term" value="C:chromosome"/>
    <property type="evidence" value="ECO:0000314"/>
    <property type="project" value="HPA"/>
</dbReference>
<dbReference type="GO" id="GO:0005730">
    <property type="term" value="C:nucleolus"/>
    <property type="evidence" value="ECO:0000314"/>
    <property type="project" value="HPA"/>
</dbReference>
<dbReference type="GO" id="GO:0005654">
    <property type="term" value="C:nucleoplasm"/>
    <property type="evidence" value="ECO:0000304"/>
    <property type="project" value="Reactome"/>
</dbReference>
<dbReference type="GO" id="GO:0005634">
    <property type="term" value="C:nucleus"/>
    <property type="evidence" value="ECO:0000318"/>
    <property type="project" value="GO_Central"/>
</dbReference>
<dbReference type="GO" id="GO:0003682">
    <property type="term" value="F:chromatin binding"/>
    <property type="evidence" value="ECO:0007669"/>
    <property type="project" value="Ensembl"/>
</dbReference>
<dbReference type="GO" id="GO:0140938">
    <property type="term" value="F:histone H3 methyltransferase activity"/>
    <property type="evidence" value="ECO:0000314"/>
    <property type="project" value="UniProtKB"/>
</dbReference>
<dbReference type="GO" id="GO:0140945">
    <property type="term" value="F:histone H3K4 monomethyltransferase activity"/>
    <property type="evidence" value="ECO:0007669"/>
    <property type="project" value="UniProtKB-EC"/>
</dbReference>
<dbReference type="GO" id="GO:0042054">
    <property type="term" value="F:histone methyltransferase activity"/>
    <property type="evidence" value="ECO:0000314"/>
    <property type="project" value="UniProtKB"/>
</dbReference>
<dbReference type="GO" id="GO:0002039">
    <property type="term" value="F:p53 binding"/>
    <property type="evidence" value="ECO:0000353"/>
    <property type="project" value="UniProtKB"/>
</dbReference>
<dbReference type="GO" id="GO:0016279">
    <property type="term" value="F:protein-lysine N-methyltransferase activity"/>
    <property type="evidence" value="ECO:0000314"/>
    <property type="project" value="UniProtKB"/>
</dbReference>
<dbReference type="GO" id="GO:0006325">
    <property type="term" value="P:chromatin organization"/>
    <property type="evidence" value="ECO:0000303"/>
    <property type="project" value="UniProtKB"/>
</dbReference>
<dbReference type="GO" id="GO:0006974">
    <property type="term" value="P:DNA damage response"/>
    <property type="evidence" value="ECO:0000314"/>
    <property type="project" value="MGI"/>
</dbReference>
<dbReference type="GO" id="GO:0070828">
    <property type="term" value="P:heterochromatin organization"/>
    <property type="evidence" value="ECO:0000314"/>
    <property type="project" value="MGI"/>
</dbReference>
<dbReference type="GO" id="GO:0018027">
    <property type="term" value="P:peptidyl-lysine dimethylation"/>
    <property type="evidence" value="ECO:0000314"/>
    <property type="project" value="UniProtKB"/>
</dbReference>
<dbReference type="GO" id="GO:0018026">
    <property type="term" value="P:peptidyl-lysine monomethylation"/>
    <property type="evidence" value="ECO:0000314"/>
    <property type="project" value="UniProtKB"/>
</dbReference>
<dbReference type="GO" id="GO:0045893">
    <property type="term" value="P:positive regulation of DNA-templated transcription"/>
    <property type="evidence" value="ECO:0000318"/>
    <property type="project" value="GO_Central"/>
</dbReference>
<dbReference type="GO" id="GO:0006282">
    <property type="term" value="P:regulation of DNA repair"/>
    <property type="evidence" value="ECO:0007669"/>
    <property type="project" value="Ensembl"/>
</dbReference>
<dbReference type="GO" id="GO:0045471">
    <property type="term" value="P:response to ethanol"/>
    <property type="evidence" value="ECO:0007669"/>
    <property type="project" value="Ensembl"/>
</dbReference>
<dbReference type="CDD" id="cd10530">
    <property type="entry name" value="SET_SETD7"/>
    <property type="match status" value="1"/>
</dbReference>
<dbReference type="FunFam" id="2.170.270.10:FF:000024">
    <property type="entry name" value="Histone-lysine N-methyltransferase SETD7"/>
    <property type="match status" value="1"/>
</dbReference>
<dbReference type="FunFam" id="2.20.110.10:FF:000004">
    <property type="entry name" value="Histone-lysine N-methyltransferase SETD7"/>
    <property type="match status" value="1"/>
</dbReference>
<dbReference type="FunFam" id="2.20.110.10:FF:000005">
    <property type="entry name" value="Histone-lysine N-methyltransferase SETD7"/>
    <property type="match status" value="1"/>
</dbReference>
<dbReference type="Gene3D" id="2.20.110.10">
    <property type="entry name" value="Histone H3 K4-specific methyltransferase SET7/9 N-terminal domain"/>
    <property type="match status" value="3"/>
</dbReference>
<dbReference type="Gene3D" id="2.170.270.10">
    <property type="entry name" value="SET domain"/>
    <property type="match status" value="1"/>
</dbReference>
<dbReference type="IDEAL" id="IID00128"/>
<dbReference type="InterPro" id="IPR017155">
    <property type="entry name" value="Hist-Lys_N-MeTrfase_SETD7"/>
</dbReference>
<dbReference type="InterPro" id="IPR003409">
    <property type="entry name" value="MORN"/>
</dbReference>
<dbReference type="InterPro" id="IPR001214">
    <property type="entry name" value="SET_dom"/>
</dbReference>
<dbReference type="InterPro" id="IPR046341">
    <property type="entry name" value="SET_dom_sf"/>
</dbReference>
<dbReference type="InterPro" id="IPR054533">
    <property type="entry name" value="SETD7_N"/>
</dbReference>
<dbReference type="InterPro" id="IPR044436">
    <property type="entry name" value="SETD7_SET"/>
</dbReference>
<dbReference type="PANTHER" id="PTHR46820">
    <property type="entry name" value="HISTONE-LYSINE N-METHYLTRANSFERASE SETD7"/>
    <property type="match status" value="1"/>
</dbReference>
<dbReference type="PANTHER" id="PTHR46820:SF1">
    <property type="entry name" value="HISTONE-LYSINE N-METHYLTRANSFERASE SETD7"/>
    <property type="match status" value="1"/>
</dbReference>
<dbReference type="Pfam" id="PF02493">
    <property type="entry name" value="MORN"/>
    <property type="match status" value="3"/>
</dbReference>
<dbReference type="Pfam" id="PF00856">
    <property type="entry name" value="SET"/>
    <property type="match status" value="1"/>
</dbReference>
<dbReference type="Pfam" id="PF22648">
    <property type="entry name" value="SET7_N"/>
    <property type="match status" value="1"/>
</dbReference>
<dbReference type="PIRSF" id="PIRSF037249">
    <property type="entry name" value="Histone_Lys_mtfrase_SET"/>
    <property type="match status" value="1"/>
</dbReference>
<dbReference type="SMART" id="SM00317">
    <property type="entry name" value="SET"/>
    <property type="match status" value="1"/>
</dbReference>
<dbReference type="SUPFAM" id="SSF82185">
    <property type="entry name" value="Histone H3 K4-specific methyltransferase SET7/9 N-terminal domain"/>
    <property type="match status" value="1"/>
</dbReference>
<dbReference type="SUPFAM" id="SSF82199">
    <property type="entry name" value="SET domain"/>
    <property type="match status" value="1"/>
</dbReference>
<dbReference type="PROSITE" id="PS51577">
    <property type="entry name" value="SAM_MT43_SET7"/>
    <property type="match status" value="1"/>
</dbReference>
<dbReference type="PROSITE" id="PS50280">
    <property type="entry name" value="SET"/>
    <property type="match status" value="1"/>
</dbReference>
<sequence length="366" mass="40721">MDSDDEMVEEAVEGHLDDDGLPHGFCTVTYSSTDRFEGNFVHGEKNGRGKFFFFDGSTLEGYYVDDALQGQGVYTYEDGGVLQGTYVDGELNGPAQEYDTDGRLIFKGQYKDNIRHGVCWIYYPDGGSLVGEVNEDGEMTGEKIAYVYPDERTALYGKFIDGEMIEGKLATLMSTEEGRPHFELMPGNSVYHFDKSTSSCISTNALLPDPYESERVYVAESLISSAGEGLFSKVAVGPNTVMSFYNGVRITHQEVDSRDWALNGNTLSLDEETVIDVPEPYNHVSKYCASLGHKANHSFTPNCIYDMFVHPRFGPIKCIRTLRAVEADEELTVAYGYDHSPPGKSGPEAPEWYQVELKAFQATQQK</sequence>
<reference key="1">
    <citation type="journal article" date="2001" name="Mol. Cell">
        <title>Purification and functional characterization of a histone H3-lysine 4-specific methyltransferase.</title>
        <authorList>
            <person name="Wang H."/>
            <person name="Cao R."/>
            <person name="Xia L."/>
            <person name="Erdjument-Bromage H."/>
            <person name="Borchers C."/>
            <person name="Tempst P."/>
            <person name="Zhang Y."/>
        </authorList>
    </citation>
    <scope>NUCLEOTIDE SEQUENCE [MRNA]</scope>
    <scope>PROTEIN SEQUENCE OF 35-44; 108-115; 144-152; 234-258 AND 345-358</scope>
    <scope>FUNCTION</scope>
    <scope>SUBCELLULAR LOCATION</scope>
    <scope>DOMAIN</scope>
    <scope>MUTAGENESIS OF HIS-297</scope>
    <source>
        <tissue>Brain</tissue>
    </source>
</reference>
<reference key="2">
    <citation type="journal article" date="2002" name="Genes Dev.">
        <title>Set9, a novel histone H3 methyltransferase that facilitates transcription by precluding histone tail modifications required for heterochromatin formation.</title>
        <authorList>
            <person name="Nishioka K."/>
            <person name="Chuikov S."/>
            <person name="Sarma K."/>
            <person name="Erdjument-Bromage H."/>
            <person name="Allis C.D."/>
            <person name="Tempst P."/>
            <person name="Reinberg D."/>
        </authorList>
    </citation>
    <scope>NUCLEOTIDE SEQUENCE [MRNA]</scope>
    <scope>PROTEIN SEQUENCE OF 36-45; 104-115; 144-152; 159-169; 201-250 AND 324-358</scope>
    <scope>FUNCTION</scope>
    <scope>SUBCELLULAR LOCATION</scope>
    <scope>MUTAGENESIS OF HIS-297</scope>
    <source>
        <tissue>Cervix carcinoma</tissue>
    </source>
</reference>
<reference key="3">
    <citation type="journal article" date="2005" name="Nature">
        <title>Generation and annotation of the DNA sequences of human chromosomes 2 and 4.</title>
        <authorList>
            <person name="Hillier L.W."/>
            <person name="Graves T.A."/>
            <person name="Fulton R.S."/>
            <person name="Fulton L.A."/>
            <person name="Pepin K.H."/>
            <person name="Minx P."/>
            <person name="Wagner-McPherson C."/>
            <person name="Layman D."/>
            <person name="Wylie K."/>
            <person name="Sekhon M."/>
            <person name="Becker M.C."/>
            <person name="Fewell G.A."/>
            <person name="Delehaunty K.D."/>
            <person name="Miner T.L."/>
            <person name="Nash W.E."/>
            <person name="Kremitzki C."/>
            <person name="Oddy L."/>
            <person name="Du H."/>
            <person name="Sun H."/>
            <person name="Bradshaw-Cordum H."/>
            <person name="Ali J."/>
            <person name="Carter J."/>
            <person name="Cordes M."/>
            <person name="Harris A."/>
            <person name="Isak A."/>
            <person name="van Brunt A."/>
            <person name="Nguyen C."/>
            <person name="Du F."/>
            <person name="Courtney L."/>
            <person name="Kalicki J."/>
            <person name="Ozersky P."/>
            <person name="Abbott S."/>
            <person name="Armstrong J."/>
            <person name="Belter E.A."/>
            <person name="Caruso L."/>
            <person name="Cedroni M."/>
            <person name="Cotton M."/>
            <person name="Davidson T."/>
            <person name="Desai A."/>
            <person name="Elliott G."/>
            <person name="Erb T."/>
            <person name="Fronick C."/>
            <person name="Gaige T."/>
            <person name="Haakenson W."/>
            <person name="Haglund K."/>
            <person name="Holmes A."/>
            <person name="Harkins R."/>
            <person name="Kim K."/>
            <person name="Kruchowski S.S."/>
            <person name="Strong C.M."/>
            <person name="Grewal N."/>
            <person name="Goyea E."/>
            <person name="Hou S."/>
            <person name="Levy A."/>
            <person name="Martinka S."/>
            <person name="Mead K."/>
            <person name="McLellan M.D."/>
            <person name="Meyer R."/>
            <person name="Randall-Maher J."/>
            <person name="Tomlinson C."/>
            <person name="Dauphin-Kohlberg S."/>
            <person name="Kozlowicz-Reilly A."/>
            <person name="Shah N."/>
            <person name="Swearengen-Shahid S."/>
            <person name="Snider J."/>
            <person name="Strong J.T."/>
            <person name="Thompson J."/>
            <person name="Yoakum M."/>
            <person name="Leonard S."/>
            <person name="Pearman C."/>
            <person name="Trani L."/>
            <person name="Radionenko M."/>
            <person name="Waligorski J.E."/>
            <person name="Wang C."/>
            <person name="Rock S.M."/>
            <person name="Tin-Wollam A.-M."/>
            <person name="Maupin R."/>
            <person name="Latreille P."/>
            <person name="Wendl M.C."/>
            <person name="Yang S.-P."/>
            <person name="Pohl C."/>
            <person name="Wallis J.W."/>
            <person name="Spieth J."/>
            <person name="Bieri T.A."/>
            <person name="Berkowicz N."/>
            <person name="Nelson J.O."/>
            <person name="Osborne J."/>
            <person name="Ding L."/>
            <person name="Meyer R."/>
            <person name="Sabo A."/>
            <person name="Shotland Y."/>
            <person name="Sinha P."/>
            <person name="Wohldmann P.E."/>
            <person name="Cook L.L."/>
            <person name="Hickenbotham M.T."/>
            <person name="Eldred J."/>
            <person name="Williams D."/>
            <person name="Jones T.A."/>
            <person name="She X."/>
            <person name="Ciccarelli F.D."/>
            <person name="Izaurralde E."/>
            <person name="Taylor J."/>
            <person name="Schmutz J."/>
            <person name="Myers R.M."/>
            <person name="Cox D.R."/>
            <person name="Huang X."/>
            <person name="McPherson J.D."/>
            <person name="Mardis E.R."/>
            <person name="Clifton S.W."/>
            <person name="Warren W.C."/>
            <person name="Chinwalla A.T."/>
            <person name="Eddy S.R."/>
            <person name="Marra M.A."/>
            <person name="Ovcharenko I."/>
            <person name="Furey T.S."/>
            <person name="Miller W."/>
            <person name="Eichler E.E."/>
            <person name="Bork P."/>
            <person name="Suyama M."/>
            <person name="Torrents D."/>
            <person name="Waterston R.H."/>
            <person name="Wilson R.K."/>
        </authorList>
    </citation>
    <scope>NUCLEOTIDE SEQUENCE [LARGE SCALE GENOMIC DNA]</scope>
</reference>
<reference key="4">
    <citation type="journal article" date="2000" name="DNA Res.">
        <title>Prediction of the coding sequences of unidentified human genes. XIX. The complete sequences of 100 new cDNA clones from brain which code for large proteins in vitro.</title>
        <authorList>
            <person name="Nagase T."/>
            <person name="Kikuno R."/>
            <person name="Hattori A."/>
            <person name="Kondo Y."/>
            <person name="Okumura K."/>
            <person name="Ohara O."/>
        </authorList>
    </citation>
    <scope>NUCLEOTIDE SEQUENCE [LARGE SCALE MRNA]</scope>
    <source>
        <tissue>Brain</tissue>
    </source>
</reference>
<reference key="5">
    <citation type="journal article" date="2004" name="Genome Res.">
        <title>The status, quality, and expansion of the NIH full-length cDNA project: the Mammalian Gene Collection (MGC).</title>
        <authorList>
            <consortium name="The MGC Project Team"/>
        </authorList>
    </citation>
    <scope>NUCLEOTIDE SEQUENCE [LARGE SCALE MRNA]</scope>
</reference>
<reference key="6">
    <citation type="journal article" date="2003" name="Mol. Cell. Biol.">
        <title>Cascade of distinct histone modifications during collagenase gene activation.</title>
        <authorList>
            <person name="Martens J.H."/>
            <person name="Verlaan M."/>
            <person name="Kalkhoven E."/>
            <person name="Zantema A."/>
        </authorList>
    </citation>
    <scope>FUNCTION</scope>
</reference>
<reference key="7">
    <citation type="journal article" date="2004" name="Mol. Cell">
        <title>Gene-specific modulation of TAF10 function by SET9-mediated methylation.</title>
        <authorList>
            <person name="Kouskouti A."/>
            <person name="Scheer E."/>
            <person name="Staub A."/>
            <person name="Tora L."/>
            <person name="Talianidis I."/>
        </authorList>
    </citation>
    <scope>FUNCTION</scope>
    <scope>CATALYTIC ACTIVITY</scope>
    <scope>MUTAGENESIS OF HIS-297</scope>
</reference>
<reference key="8">
    <citation type="journal article" date="2005" name="J. Biol. Chem.">
        <title>Pdx-1 links histone H3-Lys-4 methylation to RNA polymerase II elongation during activation of insulin transcription.</title>
        <authorList>
            <person name="Francis J."/>
            <person name="Chakrabarti S.K."/>
            <person name="Garmey J.C."/>
            <person name="Mirmira R.G."/>
        </authorList>
    </citation>
    <scope>FUNCTION</scope>
    <scope>TISSUE SPECIFICITY</scope>
    <scope>INTERACTION WITH IPF1</scope>
    <scope>MUTAGENESIS OF HIS-297</scope>
</reference>
<reference key="9">
    <citation type="journal article" date="2006" name="Nature">
        <title>Repression of p53 activity by Smyd2-mediated methylation.</title>
        <authorList>
            <person name="Huang J."/>
            <person name="Perez-Burgos L."/>
            <person name="Placek B.J."/>
            <person name="Sengupta R."/>
            <person name="Richter M."/>
            <person name="Dorsey J.A."/>
            <person name="Kubicek S."/>
            <person name="Opravil S."/>
            <person name="Jenuwein T."/>
            <person name="Berger S.L."/>
        </authorList>
    </citation>
    <scope>FUNCTION</scope>
</reference>
<reference key="10">
    <citation type="journal article" date="2006" name="J. Am. Chem. Soc.">
        <title>Catalytic mechanism and product specificity of the histone lysine methyltransferase SET7/9: an ab initio QM/MM-FE study with multiple initial structures.</title>
        <authorList>
            <person name="Hu P."/>
            <person name="Zhang Y."/>
        </authorList>
    </citation>
    <scope>MUTAGENESIS OF GLU-220; GLU-228; TYR-245 AND LYS-294</scope>
</reference>
<reference key="11">
    <citation type="journal article" date="2011" name="BMC Syst. Biol.">
        <title>Initial characterization of the human central proteome.</title>
        <authorList>
            <person name="Burkard T.R."/>
            <person name="Planyavsky M."/>
            <person name="Kaupe I."/>
            <person name="Breitwieser F.P."/>
            <person name="Buerckstuemmer T."/>
            <person name="Bennett K.L."/>
            <person name="Superti-Furga G."/>
            <person name="Colinge J."/>
        </authorList>
    </citation>
    <scope>IDENTIFICATION BY MASS SPECTROMETRY [LARGE SCALE ANALYSIS]</scope>
</reference>
<reference key="12">
    <citation type="journal article" date="2014" name="J. Proteomics">
        <title>An enzyme assisted RP-RPLC approach for in-depth analysis of human liver phosphoproteome.</title>
        <authorList>
            <person name="Bian Y."/>
            <person name="Song C."/>
            <person name="Cheng K."/>
            <person name="Dong M."/>
            <person name="Wang F."/>
            <person name="Huang J."/>
            <person name="Sun D."/>
            <person name="Wang L."/>
            <person name="Ye M."/>
            <person name="Zou H."/>
        </authorList>
    </citation>
    <scope>IDENTIFICATION BY MASS SPECTROMETRY [LARGE SCALE ANALYSIS]</scope>
    <source>
        <tissue>Liver</tissue>
    </source>
</reference>
<reference key="13">
    <citation type="journal article" date="2022" name="Bone Res.">
        <title>RIOX1-demethylated cGAS regulates ionizing radiation-elicited DNA repair.</title>
        <authorList>
            <person name="Xiao Y."/>
            <person name="Li J."/>
            <person name="Liao X."/>
            <person name="He Y."/>
            <person name="He T."/>
            <person name="Yang C."/>
            <person name="Jiang L."/>
            <person name="Jeon S.M."/>
            <person name="Lee J.H."/>
            <person name="Chen Y."/>
            <person name="Liu R."/>
            <person name="Chen Q."/>
        </authorList>
    </citation>
    <scope>FUNCTION</scope>
</reference>
<reference key="14">
    <citation type="journal article" date="2002" name="Cell">
        <title>Crystal structure and functional analysis of the histone methyltransferase SET7/9.</title>
        <authorList>
            <person name="Wilson J."/>
            <person name="Jing C."/>
            <person name="Walker P."/>
            <person name="Martin S."/>
            <person name="Howell S."/>
            <person name="Blackburn G."/>
            <person name="Gamblin S."/>
            <person name="Xiao B."/>
        </authorList>
    </citation>
    <scope>X-RAY CRYSTALLOGRAPHY (2.1 ANGSTROMS) OF 52-344</scope>
</reference>
<reference key="15">
    <citation type="journal article" date="2002" name="Nat. Struct. Biol.">
        <title>The active site of the SET domain is constructed on a knot.</title>
        <authorList>
            <person name="Jacobs S.A."/>
            <person name="Harp J.M."/>
            <person name="Devarakonda S."/>
            <person name="Kim Y."/>
            <person name="Rastinejad F."/>
            <person name="Khorasanizadeh S."/>
        </authorList>
    </citation>
    <scope>X-RAY CRYSTALLOGRAPHY (2.2 ANGSTROMS)</scope>
</reference>
<reference key="16">
    <citation type="journal article" date="2003" name="Nature">
        <title>Structure and catalytic mechanism of the human histone methyltransferase SET7/9.</title>
        <authorList>
            <person name="Xiao B."/>
            <person name="Jing C."/>
            <person name="Wilson J.R."/>
            <person name="Walker P.A."/>
            <person name="Vasisht N."/>
            <person name="Kelly G."/>
            <person name="Howell S."/>
            <person name="Taylor I.A."/>
            <person name="Blackburn G.M."/>
            <person name="Gamblin S.J."/>
        </authorList>
    </citation>
    <scope>X-RAY CRYSTALLOGRAPHY (1.75 ANGSTROMS) OF 108-366 IN COMPLEX WITH S-ADENOSYL-L-METHIONINE AND HISTONE PEPTIDE</scope>
    <scope>FUNCTION</scope>
    <scope>CATALYTIC ACTIVITY</scope>
    <scope>MUTAGENESIS OF TYR-245</scope>
</reference>
<reference key="17">
    <citation type="journal article" date="2003" name="EMBO J.">
        <title>Mechanism of histone lysine methyl transfer revealed by the structure of SET7/9-AdoMet.</title>
        <authorList>
            <person name="Kwon T."/>
            <person name="Chang J.H."/>
            <person name="Kwak E."/>
            <person name="Lee C.W."/>
            <person name="Joachimiak A."/>
            <person name="Kim Y.C."/>
            <person name="Lee J."/>
            <person name="Cho Y."/>
        </authorList>
    </citation>
    <scope>X-RAY CRYSTALLOGRAPHY (1.7 ANGSTROMS) OF 70-366 IN COMPLEX WITH S-ADENOSYL-L-METHIONINE</scope>
</reference>
<reference key="18">
    <citation type="journal article" date="2004" name="Nature">
        <title>Regulation of p53 activity through lysine methylation.</title>
        <authorList>
            <person name="Chuikov S."/>
            <person name="Kurash J.K."/>
            <person name="Wilson J.R."/>
            <person name="Xiao B."/>
            <person name="Justin N."/>
            <person name="Ivanov G.S."/>
            <person name="McKinney K."/>
            <person name="Tempst P."/>
            <person name="Prives C."/>
            <person name="Gamblin S.J."/>
            <person name="Barlev N.A."/>
            <person name="Reinberg D."/>
        </authorList>
    </citation>
    <scope>X-RAY CRYSTALLOGRAPHY (1.75 ANGSTROMS) OF 108-366</scope>
    <scope>FUNCTION</scope>
    <scope>CATALYTIC ACTIVITY</scope>
    <scope>MUTAGENESIS OF HIS-297</scope>
</reference>
<reference key="19">
    <citation type="journal article" date="2006" name="Nat. Struct. Mol. Biol.">
        <title>Structural basis for the methylation site specificity of SET7/9.</title>
        <authorList>
            <person name="Couture J.-F."/>
            <person name="Collazo E."/>
            <person name="Hauk G."/>
            <person name="Trievel R.C."/>
        </authorList>
    </citation>
    <scope>X-RAY CRYSTALLOGRAPHY (1.3 ANGSTROMS) OF 110-366</scope>
    <scope>FUNCTION</scope>
    <scope>CATALYTIC ACTIVITY</scope>
    <scope>BIOPHYSICOCHEMICAL PROPERTIES</scope>
    <scope>MUTAGENESIS OF LYS-317</scope>
</reference>
<keyword id="KW-0002">3D-structure</keyword>
<keyword id="KW-0010">Activator</keyword>
<keyword id="KW-0156">Chromatin regulator</keyword>
<keyword id="KW-0158">Chromosome</keyword>
<keyword id="KW-0903">Direct protein sequencing</keyword>
<keyword id="KW-0489">Methyltransferase</keyword>
<keyword id="KW-0539">Nucleus</keyword>
<keyword id="KW-1267">Proteomics identification</keyword>
<keyword id="KW-1185">Reference proteome</keyword>
<keyword id="KW-0677">Repeat</keyword>
<keyword id="KW-0949">S-adenosyl-L-methionine</keyword>
<keyword id="KW-0804">Transcription</keyword>
<keyword id="KW-0805">Transcription regulation</keyword>
<keyword id="KW-0808">Transferase</keyword>
<name>SETD7_HUMAN</name>
<gene>
    <name type="primary">SETD7</name>
    <name type="synonym">KIAA1717</name>
    <name type="synonym">KMT7</name>
    <name evidence="16" type="synonym">SET7</name>
    <name evidence="17" type="synonym">SET9</name>
</gene>
<organism>
    <name type="scientific">Homo sapiens</name>
    <name type="common">Human</name>
    <dbReference type="NCBI Taxonomy" id="9606"/>
    <lineage>
        <taxon>Eukaryota</taxon>
        <taxon>Metazoa</taxon>
        <taxon>Chordata</taxon>
        <taxon>Craniata</taxon>
        <taxon>Vertebrata</taxon>
        <taxon>Euteleostomi</taxon>
        <taxon>Mammalia</taxon>
        <taxon>Eutheria</taxon>
        <taxon>Euarchontoglires</taxon>
        <taxon>Primates</taxon>
        <taxon>Haplorrhini</taxon>
        <taxon>Catarrhini</taxon>
        <taxon>Hominidae</taxon>
        <taxon>Homo</taxon>
    </lineage>
</organism>
<evidence type="ECO:0000250" key="1">
    <source>
        <dbReference type="UniProtKB" id="Q8VHL1"/>
    </source>
</evidence>
<evidence type="ECO:0000255" key="2">
    <source>
        <dbReference type="PROSITE-ProRule" id="PRU00190"/>
    </source>
</evidence>
<evidence type="ECO:0000255" key="3">
    <source>
        <dbReference type="PROSITE-ProRule" id="PRU00910"/>
    </source>
</evidence>
<evidence type="ECO:0000269" key="4">
    <source>
    </source>
</evidence>
<evidence type="ECO:0000269" key="5">
    <source>
    </source>
</evidence>
<evidence type="ECO:0000269" key="6">
    <source>
    </source>
</evidence>
<evidence type="ECO:0000269" key="7">
    <source>
    </source>
</evidence>
<evidence type="ECO:0000269" key="8">
    <source>
    </source>
</evidence>
<evidence type="ECO:0000269" key="9">
    <source>
    </source>
</evidence>
<evidence type="ECO:0000269" key="10">
    <source>
    </source>
</evidence>
<evidence type="ECO:0000269" key="11">
    <source>
    </source>
</evidence>
<evidence type="ECO:0000269" key="12">
    <source>
    </source>
</evidence>
<evidence type="ECO:0000269" key="13">
    <source>
    </source>
</evidence>
<evidence type="ECO:0000269" key="14">
    <source>
    </source>
</evidence>
<evidence type="ECO:0000269" key="15">
    <source>
    </source>
</evidence>
<evidence type="ECO:0000303" key="16">
    <source>
    </source>
</evidence>
<evidence type="ECO:0000303" key="17">
    <source>
    </source>
</evidence>
<evidence type="ECO:0000303" key="18">
    <source>
    </source>
</evidence>
<evidence type="ECO:0000305" key="19"/>
<evidence type="ECO:0000305" key="20">
    <source>
    </source>
</evidence>
<evidence type="ECO:0000305" key="21">
    <source>
    </source>
</evidence>
<evidence type="ECO:0007829" key="22">
    <source>
        <dbReference type="PDB" id="1H3I"/>
    </source>
</evidence>
<evidence type="ECO:0007829" key="23">
    <source>
        <dbReference type="PDB" id="1MT6"/>
    </source>
</evidence>
<evidence type="ECO:0007829" key="24">
    <source>
        <dbReference type="PDB" id="1MUF"/>
    </source>
</evidence>
<evidence type="ECO:0007829" key="25">
    <source>
        <dbReference type="PDB" id="2F69"/>
    </source>
</evidence>
<evidence type="ECO:0007829" key="26">
    <source>
        <dbReference type="PDB" id="3M57"/>
    </source>
</evidence>
<evidence type="ECO:0007829" key="27">
    <source>
        <dbReference type="PDB" id="3M58"/>
    </source>
</evidence>
<evidence type="ECO:0007829" key="28">
    <source>
        <dbReference type="PDB" id="3OS5"/>
    </source>
</evidence>
<evidence type="ECO:0007829" key="29">
    <source>
        <dbReference type="PDB" id="4J83"/>
    </source>
</evidence>
<evidence type="ECO:0007829" key="30">
    <source>
        <dbReference type="PDB" id="5YLT"/>
    </source>
</evidence>
<accession>Q8WTS6</accession>
<accession>B5WWL3</accession>
<accession>Q0VAH3</accession>
<accession>Q4W5A9</accession>
<accession>Q9C0E6</accession>